<accession>Q1AWC4</accession>
<proteinExistence type="inferred from homology"/>
<keyword id="KW-0030">Aminoacyl-tRNA synthetase</keyword>
<keyword id="KW-0067">ATP-binding</keyword>
<keyword id="KW-0963">Cytoplasm</keyword>
<keyword id="KW-0436">Ligase</keyword>
<keyword id="KW-0547">Nucleotide-binding</keyword>
<keyword id="KW-0648">Protein biosynthesis</keyword>
<keyword id="KW-1185">Reference proteome</keyword>
<name>SYH_RUBXD</name>
<reference key="1">
    <citation type="submission" date="2006-06" db="EMBL/GenBank/DDBJ databases">
        <title>Complete sequence of Rubrobacter xylanophilus DSM 9941.</title>
        <authorList>
            <consortium name="US DOE Joint Genome Institute"/>
            <person name="Copeland A."/>
            <person name="Lucas S."/>
            <person name="Lapidus A."/>
            <person name="Barry K."/>
            <person name="Detter J.C."/>
            <person name="Glavina del Rio T."/>
            <person name="Hammon N."/>
            <person name="Israni S."/>
            <person name="Dalin E."/>
            <person name="Tice H."/>
            <person name="Pitluck S."/>
            <person name="Munk A.C."/>
            <person name="Brettin T."/>
            <person name="Bruce D."/>
            <person name="Han C."/>
            <person name="Tapia R."/>
            <person name="Gilna P."/>
            <person name="Schmutz J."/>
            <person name="Larimer F."/>
            <person name="Land M."/>
            <person name="Hauser L."/>
            <person name="Kyrpides N."/>
            <person name="Lykidis A."/>
            <person name="da Costa M.S."/>
            <person name="Rainey F.A."/>
            <person name="Empadinhas N."/>
            <person name="Jolivet E."/>
            <person name="Battista J.R."/>
            <person name="Richardson P."/>
        </authorList>
    </citation>
    <scope>NUCLEOTIDE SEQUENCE [LARGE SCALE GENOMIC DNA]</scope>
    <source>
        <strain>DSM 9941 / JCM 11954 / NBRC 16129 / PRD-1</strain>
    </source>
</reference>
<gene>
    <name evidence="1" type="primary">hisS</name>
    <name type="ordered locus">Rxyl_1340</name>
</gene>
<feature type="chain" id="PRO_1000016439" description="Histidine--tRNA ligase">
    <location>
        <begin position="1"/>
        <end position="424"/>
    </location>
</feature>
<feature type="region of interest" description="Disordered" evidence="2">
    <location>
        <begin position="1"/>
        <end position="22"/>
    </location>
</feature>
<comment type="catalytic activity">
    <reaction evidence="1">
        <text>tRNA(His) + L-histidine + ATP = L-histidyl-tRNA(His) + AMP + diphosphate + H(+)</text>
        <dbReference type="Rhea" id="RHEA:17313"/>
        <dbReference type="Rhea" id="RHEA-COMP:9665"/>
        <dbReference type="Rhea" id="RHEA-COMP:9689"/>
        <dbReference type="ChEBI" id="CHEBI:15378"/>
        <dbReference type="ChEBI" id="CHEBI:30616"/>
        <dbReference type="ChEBI" id="CHEBI:33019"/>
        <dbReference type="ChEBI" id="CHEBI:57595"/>
        <dbReference type="ChEBI" id="CHEBI:78442"/>
        <dbReference type="ChEBI" id="CHEBI:78527"/>
        <dbReference type="ChEBI" id="CHEBI:456215"/>
        <dbReference type="EC" id="6.1.1.21"/>
    </reaction>
</comment>
<comment type="subunit">
    <text evidence="1">Homodimer.</text>
</comment>
<comment type="subcellular location">
    <subcellularLocation>
        <location evidence="1">Cytoplasm</location>
    </subcellularLocation>
</comment>
<comment type="similarity">
    <text evidence="1">Belongs to the class-II aminoacyl-tRNA synthetase family.</text>
</comment>
<sequence length="424" mass="47271">MSYRRPKGTYDVYPGDAARQEPHERPDLWDRLYDAARDLFRRYGYAEVRTPVFEEAELFVRSTGETSDIVRKEMFVFRDKAGRELALRPEGTAGVVRAYVEHGLYKLAQPVKMWYFGPMFRHERQQKGRYRQHTQIGAEVLGSGDPLVDVEVVALLYAIHRSAGVREEVIHLNNLGDVETRRRYVPELRAFLERHRSELDPDSVARIETNPLRTFDSKDPNTRAVLREAPLIGEYLSEEAAAHLRAVEEGLEALGIPYVRDERLVRGLDYYTSTVFEAKSPVLGAQDTVGAGGRYNRLVEELGGPDVPGIGFGTGVERVLLAARAAEPESALDAFFVTLSPEARLPALQLAEALRAEGLSCELDYAGRSPKGQFRQADRSGASYAVVLGEEELSGGFCTLRDMKSGEERRVSGGPKGLLRAIAG</sequence>
<organism>
    <name type="scientific">Rubrobacter xylanophilus (strain DSM 9941 / JCM 11954 / NBRC 16129 / PRD-1)</name>
    <dbReference type="NCBI Taxonomy" id="266117"/>
    <lineage>
        <taxon>Bacteria</taxon>
        <taxon>Bacillati</taxon>
        <taxon>Actinomycetota</taxon>
        <taxon>Rubrobacteria</taxon>
        <taxon>Rubrobacterales</taxon>
        <taxon>Rubrobacteraceae</taxon>
        <taxon>Rubrobacter</taxon>
    </lineage>
</organism>
<protein>
    <recommendedName>
        <fullName evidence="1">Histidine--tRNA ligase</fullName>
        <ecNumber evidence="1">6.1.1.21</ecNumber>
    </recommendedName>
    <alternativeName>
        <fullName evidence="1">Histidyl-tRNA synthetase</fullName>
        <shortName evidence="1">HisRS</shortName>
    </alternativeName>
</protein>
<dbReference type="EC" id="6.1.1.21" evidence="1"/>
<dbReference type="EMBL" id="CP000386">
    <property type="protein sequence ID" value="ABG04304.1"/>
    <property type="molecule type" value="Genomic_DNA"/>
</dbReference>
<dbReference type="RefSeq" id="WP_011564321.1">
    <property type="nucleotide sequence ID" value="NC_008148.1"/>
</dbReference>
<dbReference type="SMR" id="Q1AWC4"/>
<dbReference type="STRING" id="266117.Rxyl_1340"/>
<dbReference type="KEGG" id="rxy:Rxyl_1340"/>
<dbReference type="eggNOG" id="COG0124">
    <property type="taxonomic scope" value="Bacteria"/>
</dbReference>
<dbReference type="HOGENOM" id="CLU_025113_1_1_11"/>
<dbReference type="PhylomeDB" id="Q1AWC4"/>
<dbReference type="Proteomes" id="UP000006637">
    <property type="component" value="Chromosome"/>
</dbReference>
<dbReference type="GO" id="GO:0005737">
    <property type="term" value="C:cytoplasm"/>
    <property type="evidence" value="ECO:0007669"/>
    <property type="project" value="UniProtKB-SubCell"/>
</dbReference>
<dbReference type="GO" id="GO:0005524">
    <property type="term" value="F:ATP binding"/>
    <property type="evidence" value="ECO:0007669"/>
    <property type="project" value="UniProtKB-UniRule"/>
</dbReference>
<dbReference type="GO" id="GO:0004821">
    <property type="term" value="F:histidine-tRNA ligase activity"/>
    <property type="evidence" value="ECO:0007669"/>
    <property type="project" value="UniProtKB-UniRule"/>
</dbReference>
<dbReference type="GO" id="GO:0006427">
    <property type="term" value="P:histidyl-tRNA aminoacylation"/>
    <property type="evidence" value="ECO:0007669"/>
    <property type="project" value="UniProtKB-UniRule"/>
</dbReference>
<dbReference type="CDD" id="cd00773">
    <property type="entry name" value="HisRS-like_core"/>
    <property type="match status" value="1"/>
</dbReference>
<dbReference type="CDD" id="cd00859">
    <property type="entry name" value="HisRS_anticodon"/>
    <property type="match status" value="1"/>
</dbReference>
<dbReference type="Gene3D" id="3.40.50.800">
    <property type="entry name" value="Anticodon-binding domain"/>
    <property type="match status" value="1"/>
</dbReference>
<dbReference type="Gene3D" id="3.30.930.10">
    <property type="entry name" value="Bira Bifunctional Protein, Domain 2"/>
    <property type="match status" value="1"/>
</dbReference>
<dbReference type="HAMAP" id="MF_00127">
    <property type="entry name" value="His_tRNA_synth"/>
    <property type="match status" value="1"/>
</dbReference>
<dbReference type="InterPro" id="IPR006195">
    <property type="entry name" value="aa-tRNA-synth_II"/>
</dbReference>
<dbReference type="InterPro" id="IPR045864">
    <property type="entry name" value="aa-tRNA-synth_II/BPL/LPL"/>
</dbReference>
<dbReference type="InterPro" id="IPR004154">
    <property type="entry name" value="Anticodon-bd"/>
</dbReference>
<dbReference type="InterPro" id="IPR036621">
    <property type="entry name" value="Anticodon-bd_dom_sf"/>
</dbReference>
<dbReference type="InterPro" id="IPR015807">
    <property type="entry name" value="His-tRNA-ligase"/>
</dbReference>
<dbReference type="InterPro" id="IPR041715">
    <property type="entry name" value="HisRS-like_core"/>
</dbReference>
<dbReference type="InterPro" id="IPR004516">
    <property type="entry name" value="HisRS/HisZ"/>
</dbReference>
<dbReference type="InterPro" id="IPR033656">
    <property type="entry name" value="HisRS_anticodon"/>
</dbReference>
<dbReference type="NCBIfam" id="TIGR00442">
    <property type="entry name" value="hisS"/>
    <property type="match status" value="1"/>
</dbReference>
<dbReference type="PANTHER" id="PTHR43707:SF1">
    <property type="entry name" value="HISTIDINE--TRNA LIGASE, MITOCHONDRIAL-RELATED"/>
    <property type="match status" value="1"/>
</dbReference>
<dbReference type="PANTHER" id="PTHR43707">
    <property type="entry name" value="HISTIDYL-TRNA SYNTHETASE"/>
    <property type="match status" value="1"/>
</dbReference>
<dbReference type="Pfam" id="PF03129">
    <property type="entry name" value="HGTP_anticodon"/>
    <property type="match status" value="1"/>
</dbReference>
<dbReference type="Pfam" id="PF13393">
    <property type="entry name" value="tRNA-synt_His"/>
    <property type="match status" value="1"/>
</dbReference>
<dbReference type="PIRSF" id="PIRSF001549">
    <property type="entry name" value="His-tRNA_synth"/>
    <property type="match status" value="1"/>
</dbReference>
<dbReference type="SUPFAM" id="SSF52954">
    <property type="entry name" value="Class II aaRS ABD-related"/>
    <property type="match status" value="1"/>
</dbReference>
<dbReference type="SUPFAM" id="SSF55681">
    <property type="entry name" value="Class II aaRS and biotin synthetases"/>
    <property type="match status" value="1"/>
</dbReference>
<dbReference type="PROSITE" id="PS50862">
    <property type="entry name" value="AA_TRNA_LIGASE_II"/>
    <property type="match status" value="1"/>
</dbReference>
<evidence type="ECO:0000255" key="1">
    <source>
        <dbReference type="HAMAP-Rule" id="MF_00127"/>
    </source>
</evidence>
<evidence type="ECO:0000256" key="2">
    <source>
        <dbReference type="SAM" id="MobiDB-lite"/>
    </source>
</evidence>